<accession>O52164</accession>
<evidence type="ECO:0000255" key="1">
    <source>
        <dbReference type="HAMAP-Rule" id="MF_01152"/>
    </source>
</evidence>
<evidence type="ECO:0000256" key="2">
    <source>
        <dbReference type="SAM" id="MobiDB-lite"/>
    </source>
</evidence>
<sequence>MATDYYAVLGVRRDASQDEIKKAFRRLARELHPDVNPDPKTQERFKEINAAYEVLSDPQKKQVYDLGGDPLSQNGGGGAGGFGQGGFGNFSDIMDAFFGTASQRGPRSRTRRGQDAMIRLDIELDEAAFGTTKDIQVDTAVVCNTCNGEGAAPGTSAQTCDMCRGRGEVSQVTRSFLGQVMTSRPCPQCQGFATVVPTPCPECAGDGRVPSRRTLTVKIPAGVDNGTRIQLAGEGEVGPGGGPGGDLYVEIHELPHSVFQRRGDDLHCTVTIPMTGPRPSAPRCLETLDGMEEIDIRPGTQSGQSVPLHGRGITHLRGGGGRDLIVHVEVTTPGKLDAEQEHLLRELAKLRGEERPTGQFQPGQQGLFSRLKDAFNGRS</sequence>
<keyword id="KW-0143">Chaperone</keyword>
<keyword id="KW-0963">Cytoplasm</keyword>
<keyword id="KW-0235">DNA replication</keyword>
<keyword id="KW-0479">Metal-binding</keyword>
<keyword id="KW-0677">Repeat</keyword>
<keyword id="KW-0346">Stress response</keyword>
<keyword id="KW-0862">Zinc</keyword>
<keyword id="KW-0863">Zinc-finger</keyword>
<dbReference type="EMBL" id="AF025656">
    <property type="protein sequence ID" value="AAC62529.1"/>
    <property type="molecule type" value="Genomic_DNA"/>
</dbReference>
<dbReference type="SMR" id="O52164"/>
<dbReference type="GO" id="GO:0005737">
    <property type="term" value="C:cytoplasm"/>
    <property type="evidence" value="ECO:0007669"/>
    <property type="project" value="UniProtKB-SubCell"/>
</dbReference>
<dbReference type="GO" id="GO:0005524">
    <property type="term" value="F:ATP binding"/>
    <property type="evidence" value="ECO:0007669"/>
    <property type="project" value="InterPro"/>
</dbReference>
<dbReference type="GO" id="GO:0031072">
    <property type="term" value="F:heat shock protein binding"/>
    <property type="evidence" value="ECO:0007669"/>
    <property type="project" value="InterPro"/>
</dbReference>
<dbReference type="GO" id="GO:0051082">
    <property type="term" value="F:unfolded protein binding"/>
    <property type="evidence" value="ECO:0007669"/>
    <property type="project" value="UniProtKB-UniRule"/>
</dbReference>
<dbReference type="GO" id="GO:0008270">
    <property type="term" value="F:zinc ion binding"/>
    <property type="evidence" value="ECO:0007669"/>
    <property type="project" value="UniProtKB-UniRule"/>
</dbReference>
<dbReference type="GO" id="GO:0051085">
    <property type="term" value="P:chaperone cofactor-dependent protein refolding"/>
    <property type="evidence" value="ECO:0007669"/>
    <property type="project" value="TreeGrafter"/>
</dbReference>
<dbReference type="GO" id="GO:0006260">
    <property type="term" value="P:DNA replication"/>
    <property type="evidence" value="ECO:0007669"/>
    <property type="project" value="UniProtKB-KW"/>
</dbReference>
<dbReference type="GO" id="GO:0042026">
    <property type="term" value="P:protein refolding"/>
    <property type="evidence" value="ECO:0007669"/>
    <property type="project" value="TreeGrafter"/>
</dbReference>
<dbReference type="GO" id="GO:0009408">
    <property type="term" value="P:response to heat"/>
    <property type="evidence" value="ECO:0007669"/>
    <property type="project" value="InterPro"/>
</dbReference>
<dbReference type="CDD" id="cd06257">
    <property type="entry name" value="DnaJ"/>
    <property type="match status" value="1"/>
</dbReference>
<dbReference type="CDD" id="cd10747">
    <property type="entry name" value="DnaJ_C"/>
    <property type="match status" value="1"/>
</dbReference>
<dbReference type="CDD" id="cd10719">
    <property type="entry name" value="DnaJ_zf"/>
    <property type="match status" value="1"/>
</dbReference>
<dbReference type="FunFam" id="1.10.287.110:FF:000010">
    <property type="entry name" value="Molecular chaperone DnaJ"/>
    <property type="match status" value="1"/>
</dbReference>
<dbReference type="FunFam" id="2.10.230.10:FF:000002">
    <property type="entry name" value="Molecular chaperone DnaJ"/>
    <property type="match status" value="1"/>
</dbReference>
<dbReference type="Gene3D" id="1.10.287.110">
    <property type="entry name" value="DnaJ domain"/>
    <property type="match status" value="1"/>
</dbReference>
<dbReference type="Gene3D" id="2.10.230.10">
    <property type="entry name" value="Heat shock protein DnaJ, cysteine-rich domain"/>
    <property type="match status" value="1"/>
</dbReference>
<dbReference type="Gene3D" id="2.60.260.20">
    <property type="entry name" value="Urease metallochaperone UreE, N-terminal domain"/>
    <property type="match status" value="2"/>
</dbReference>
<dbReference type="HAMAP" id="MF_01152">
    <property type="entry name" value="DnaJ"/>
    <property type="match status" value="1"/>
</dbReference>
<dbReference type="InterPro" id="IPR012724">
    <property type="entry name" value="DnaJ"/>
</dbReference>
<dbReference type="InterPro" id="IPR002939">
    <property type="entry name" value="DnaJ_C"/>
</dbReference>
<dbReference type="InterPro" id="IPR001623">
    <property type="entry name" value="DnaJ_domain"/>
</dbReference>
<dbReference type="InterPro" id="IPR018253">
    <property type="entry name" value="DnaJ_domain_CS"/>
</dbReference>
<dbReference type="InterPro" id="IPR008971">
    <property type="entry name" value="HSP40/DnaJ_pept-bd"/>
</dbReference>
<dbReference type="InterPro" id="IPR001305">
    <property type="entry name" value="HSP_DnaJ_Cys-rich_dom"/>
</dbReference>
<dbReference type="InterPro" id="IPR036410">
    <property type="entry name" value="HSP_DnaJ_Cys-rich_dom_sf"/>
</dbReference>
<dbReference type="InterPro" id="IPR036869">
    <property type="entry name" value="J_dom_sf"/>
</dbReference>
<dbReference type="NCBIfam" id="NF008035">
    <property type="entry name" value="PRK10767.1"/>
    <property type="match status" value="1"/>
</dbReference>
<dbReference type="NCBIfam" id="NF010871">
    <property type="entry name" value="PRK14278.1"/>
    <property type="match status" value="1"/>
</dbReference>
<dbReference type="PANTHER" id="PTHR43096:SF48">
    <property type="entry name" value="CHAPERONE PROTEIN DNAJ"/>
    <property type="match status" value="1"/>
</dbReference>
<dbReference type="PANTHER" id="PTHR43096">
    <property type="entry name" value="DNAJ HOMOLOG 1, MITOCHONDRIAL-RELATED"/>
    <property type="match status" value="1"/>
</dbReference>
<dbReference type="Pfam" id="PF00226">
    <property type="entry name" value="DnaJ"/>
    <property type="match status" value="1"/>
</dbReference>
<dbReference type="Pfam" id="PF01556">
    <property type="entry name" value="DnaJ_C"/>
    <property type="match status" value="1"/>
</dbReference>
<dbReference type="Pfam" id="PF00684">
    <property type="entry name" value="DnaJ_CXXCXGXG"/>
    <property type="match status" value="1"/>
</dbReference>
<dbReference type="PRINTS" id="PR00625">
    <property type="entry name" value="JDOMAIN"/>
</dbReference>
<dbReference type="SMART" id="SM00271">
    <property type="entry name" value="DnaJ"/>
    <property type="match status" value="1"/>
</dbReference>
<dbReference type="SUPFAM" id="SSF46565">
    <property type="entry name" value="Chaperone J-domain"/>
    <property type="match status" value="1"/>
</dbReference>
<dbReference type="SUPFAM" id="SSF57938">
    <property type="entry name" value="DnaJ/Hsp40 cysteine-rich domain"/>
    <property type="match status" value="1"/>
</dbReference>
<dbReference type="SUPFAM" id="SSF49493">
    <property type="entry name" value="HSP40/DnaJ peptide-binding domain"/>
    <property type="match status" value="2"/>
</dbReference>
<dbReference type="PROSITE" id="PS00636">
    <property type="entry name" value="DNAJ_1"/>
    <property type="match status" value="1"/>
</dbReference>
<dbReference type="PROSITE" id="PS50076">
    <property type="entry name" value="DNAJ_2"/>
    <property type="match status" value="1"/>
</dbReference>
<dbReference type="PROSITE" id="PS51188">
    <property type="entry name" value="ZF_CR"/>
    <property type="match status" value="1"/>
</dbReference>
<gene>
    <name evidence="1" type="primary">dnaJ2</name>
</gene>
<protein>
    <recommendedName>
        <fullName evidence="1">Chaperone protein DnaJ 2</fullName>
    </recommendedName>
</protein>
<proteinExistence type="inferred from homology"/>
<comment type="function">
    <text evidence="1">Participates actively in the response to hyperosmotic and heat shock by preventing the aggregation of stress-denatured proteins and by disaggregating proteins, also in an autonomous, DnaK-independent fashion. Unfolded proteins bind initially to DnaJ; upon interaction with the DnaJ-bound protein, DnaK hydrolyzes its bound ATP, resulting in the formation of a stable complex. GrpE releases ADP from DnaK; ATP binding to DnaK triggers the release of the substrate protein, thus completing the reaction cycle. Several rounds of ATP-dependent interactions between DnaJ, DnaK and GrpE are required for fully efficient folding. Also involved, together with DnaK and GrpE, in the DNA replication of plasmids through activation of initiation proteins.</text>
</comment>
<comment type="cofactor">
    <cofactor evidence="1">
        <name>Zn(2+)</name>
        <dbReference type="ChEBI" id="CHEBI:29105"/>
    </cofactor>
    <text evidence="1">Binds 2 Zn(2+) ions per monomer.</text>
</comment>
<comment type="subunit">
    <text evidence="1">Homodimer.</text>
</comment>
<comment type="subcellular location">
    <subcellularLocation>
        <location evidence="1">Cytoplasm</location>
    </subcellularLocation>
</comment>
<comment type="domain">
    <text evidence="1">The J domain is necessary and sufficient to stimulate DnaK ATPase activity. Zinc center 1 plays an important role in the autonomous, DnaK-independent chaperone activity of DnaJ. Zinc center 2 is essential for interaction with DnaK and for DnaJ activity.</text>
</comment>
<comment type="similarity">
    <text evidence="1">Belongs to the DnaJ family.</text>
</comment>
<reference key="1">
    <citation type="journal article" date="1998" name="J. Bacteriol.">
        <title>hrcA, encoding the repressor of the groEL genes in Streptomyces albus G, is associated with a second dnaJ gene.</title>
        <authorList>
            <person name="Grandvalet C."/>
            <person name="Rapoport G."/>
            <person name="Mazodier P."/>
        </authorList>
    </citation>
    <scope>NUCLEOTIDE SEQUENCE [GENOMIC DNA]</scope>
    <source>
        <strain>J1074</strain>
    </source>
</reference>
<feature type="chain" id="PRO_0000070895" description="Chaperone protein DnaJ 2">
    <location>
        <begin position="1"/>
        <end position="379"/>
    </location>
</feature>
<feature type="domain" description="J" evidence="1">
    <location>
        <begin position="4"/>
        <end position="68"/>
    </location>
</feature>
<feature type="repeat" description="CXXCXGXG motif">
    <location>
        <begin position="143"/>
        <end position="150"/>
    </location>
</feature>
<feature type="repeat" description="CXXCXGXG motif">
    <location>
        <begin position="160"/>
        <end position="167"/>
    </location>
</feature>
<feature type="repeat" description="CXXCXGXG motif">
    <location>
        <begin position="186"/>
        <end position="193"/>
    </location>
</feature>
<feature type="repeat" description="CXXCXGXG motif">
    <location>
        <begin position="200"/>
        <end position="207"/>
    </location>
</feature>
<feature type="zinc finger region" description="CR-type" evidence="1">
    <location>
        <begin position="130"/>
        <end position="212"/>
    </location>
</feature>
<feature type="region of interest" description="Disordered" evidence="2">
    <location>
        <begin position="351"/>
        <end position="379"/>
    </location>
</feature>
<feature type="compositionally biased region" description="Polar residues" evidence="2">
    <location>
        <begin position="358"/>
        <end position="367"/>
    </location>
</feature>
<feature type="compositionally biased region" description="Basic and acidic residues" evidence="2">
    <location>
        <begin position="370"/>
        <end position="379"/>
    </location>
</feature>
<feature type="binding site" evidence="1">
    <location>
        <position position="143"/>
    </location>
    <ligand>
        <name>Zn(2+)</name>
        <dbReference type="ChEBI" id="CHEBI:29105"/>
        <label>1</label>
    </ligand>
</feature>
<feature type="binding site" evidence="1">
    <location>
        <position position="146"/>
    </location>
    <ligand>
        <name>Zn(2+)</name>
        <dbReference type="ChEBI" id="CHEBI:29105"/>
        <label>1</label>
    </ligand>
</feature>
<feature type="binding site" evidence="1">
    <location>
        <position position="160"/>
    </location>
    <ligand>
        <name>Zn(2+)</name>
        <dbReference type="ChEBI" id="CHEBI:29105"/>
        <label>2</label>
    </ligand>
</feature>
<feature type="binding site" evidence="1">
    <location>
        <position position="163"/>
    </location>
    <ligand>
        <name>Zn(2+)</name>
        <dbReference type="ChEBI" id="CHEBI:29105"/>
        <label>2</label>
    </ligand>
</feature>
<feature type="binding site" evidence="1">
    <location>
        <position position="186"/>
    </location>
    <ligand>
        <name>Zn(2+)</name>
        <dbReference type="ChEBI" id="CHEBI:29105"/>
        <label>2</label>
    </ligand>
</feature>
<feature type="binding site" evidence="1">
    <location>
        <position position="189"/>
    </location>
    <ligand>
        <name>Zn(2+)</name>
        <dbReference type="ChEBI" id="CHEBI:29105"/>
        <label>2</label>
    </ligand>
</feature>
<feature type="binding site" evidence="1">
    <location>
        <position position="200"/>
    </location>
    <ligand>
        <name>Zn(2+)</name>
        <dbReference type="ChEBI" id="CHEBI:29105"/>
        <label>1</label>
    </ligand>
</feature>
<feature type="binding site" evidence="1">
    <location>
        <position position="203"/>
    </location>
    <ligand>
        <name>Zn(2+)</name>
        <dbReference type="ChEBI" id="CHEBI:29105"/>
        <label>1</label>
    </ligand>
</feature>
<name>DNAJ2_STRAL</name>
<organism>
    <name type="scientific">Streptomyces albus G</name>
    <dbReference type="NCBI Taxonomy" id="1962"/>
    <lineage>
        <taxon>Bacteria</taxon>
        <taxon>Bacillati</taxon>
        <taxon>Actinomycetota</taxon>
        <taxon>Actinomycetes</taxon>
        <taxon>Kitasatosporales</taxon>
        <taxon>Streptomycetaceae</taxon>
        <taxon>Streptomyces</taxon>
    </lineage>
</organism>